<keyword id="KW-0249">Electron transport</keyword>
<keyword id="KW-0472">Membrane</keyword>
<keyword id="KW-0496">Mitochondrion</keyword>
<keyword id="KW-0999">Mitochondrion inner membrane</keyword>
<keyword id="KW-0520">NAD</keyword>
<keyword id="KW-0679">Respiratory chain</keyword>
<keyword id="KW-1278">Translocase</keyword>
<keyword id="KW-0812">Transmembrane</keyword>
<keyword id="KW-1133">Transmembrane helix</keyword>
<keyword id="KW-0813">Transport</keyword>
<keyword id="KW-0830">Ubiquinone</keyword>
<dbReference type="EC" id="7.1.1.2"/>
<dbReference type="EMBL" id="DQ312382">
    <property type="protein sequence ID" value="ABC47562.1"/>
    <property type="molecule type" value="Genomic_DNA"/>
</dbReference>
<dbReference type="SMR" id="Q1HUZ9"/>
<dbReference type="GO" id="GO:0005743">
    <property type="term" value="C:mitochondrial inner membrane"/>
    <property type="evidence" value="ECO:0000250"/>
    <property type="project" value="UniProtKB"/>
</dbReference>
<dbReference type="GO" id="GO:0045271">
    <property type="term" value="C:respiratory chain complex I"/>
    <property type="evidence" value="ECO:0000250"/>
    <property type="project" value="UniProtKB"/>
</dbReference>
<dbReference type="GO" id="GO:0008137">
    <property type="term" value="F:NADH dehydrogenase (ubiquinone) activity"/>
    <property type="evidence" value="ECO:0000250"/>
    <property type="project" value="UniProtKB"/>
</dbReference>
<dbReference type="GO" id="GO:0042773">
    <property type="term" value="P:ATP synthesis coupled electron transport"/>
    <property type="evidence" value="ECO:0007669"/>
    <property type="project" value="InterPro"/>
</dbReference>
<dbReference type="FunFam" id="1.10.287.3510:FF:000002">
    <property type="entry name" value="NADH-ubiquinone oxidoreductase chain 4L"/>
    <property type="match status" value="1"/>
</dbReference>
<dbReference type="Gene3D" id="1.10.287.3510">
    <property type="match status" value="1"/>
</dbReference>
<dbReference type="InterPro" id="IPR001133">
    <property type="entry name" value="NADH_UbQ_OxRdtase_chain4L/K"/>
</dbReference>
<dbReference type="InterPro" id="IPR039428">
    <property type="entry name" value="NUOK/Mnh_C1-like"/>
</dbReference>
<dbReference type="PANTHER" id="PTHR11434:SF0">
    <property type="entry name" value="NADH-UBIQUINONE OXIDOREDUCTASE CHAIN 4L"/>
    <property type="match status" value="1"/>
</dbReference>
<dbReference type="PANTHER" id="PTHR11434">
    <property type="entry name" value="NADH-UBIQUINONE OXIDOREDUCTASE SUBUNIT ND4L"/>
    <property type="match status" value="1"/>
</dbReference>
<dbReference type="Pfam" id="PF00420">
    <property type="entry name" value="Oxidored_q2"/>
    <property type="match status" value="1"/>
</dbReference>
<evidence type="ECO:0000250" key="1">
    <source>
        <dbReference type="UniProtKB" id="P03901"/>
    </source>
</evidence>
<evidence type="ECO:0000250" key="2">
    <source>
        <dbReference type="UniProtKB" id="P03902"/>
    </source>
</evidence>
<evidence type="ECO:0000255" key="3"/>
<evidence type="ECO:0000305" key="4"/>
<comment type="function">
    <text evidence="1">Core subunit of the mitochondrial membrane respiratory chain NADH dehydrogenase (Complex I) which catalyzes electron transfer from NADH through the respiratory chain, using ubiquinone as an electron acceptor. Part of the enzyme membrane arm which is embedded in the lipid bilayer and involved in proton translocation.</text>
</comment>
<comment type="catalytic activity">
    <reaction evidence="1">
        <text>a ubiquinone + NADH + 5 H(+)(in) = a ubiquinol + NAD(+) + 4 H(+)(out)</text>
        <dbReference type="Rhea" id="RHEA:29091"/>
        <dbReference type="Rhea" id="RHEA-COMP:9565"/>
        <dbReference type="Rhea" id="RHEA-COMP:9566"/>
        <dbReference type="ChEBI" id="CHEBI:15378"/>
        <dbReference type="ChEBI" id="CHEBI:16389"/>
        <dbReference type="ChEBI" id="CHEBI:17976"/>
        <dbReference type="ChEBI" id="CHEBI:57540"/>
        <dbReference type="ChEBI" id="CHEBI:57945"/>
        <dbReference type="EC" id="7.1.1.2"/>
    </reaction>
    <physiologicalReaction direction="left-to-right" evidence="1">
        <dbReference type="Rhea" id="RHEA:29092"/>
    </physiologicalReaction>
</comment>
<comment type="subunit">
    <text evidence="2">Core subunit of respiratory chain NADH dehydrogenase (Complex I) which is composed of 45 different subunits.</text>
</comment>
<comment type="subcellular location">
    <subcellularLocation>
        <location evidence="2">Mitochondrion inner membrane</location>
        <topology evidence="3">Multi-pass membrane protein</topology>
    </subcellularLocation>
</comment>
<comment type="similarity">
    <text evidence="4">Belongs to the complex I subunit 4L family.</text>
</comment>
<feature type="chain" id="PRO_0000275103" description="NADH-ubiquinone oxidoreductase chain 4L">
    <location>
        <begin position="1"/>
        <end position="98"/>
    </location>
</feature>
<feature type="transmembrane region" description="Helical" evidence="3">
    <location>
        <begin position="1"/>
        <end position="21"/>
    </location>
</feature>
<feature type="transmembrane region" description="Helical" evidence="3">
    <location>
        <begin position="29"/>
        <end position="49"/>
    </location>
</feature>
<feature type="transmembrane region" description="Helical" evidence="3">
    <location>
        <begin position="61"/>
        <end position="81"/>
    </location>
</feature>
<proteinExistence type="inferred from homology"/>
<gene>
    <name type="primary">MT-ND4L</name>
    <name type="synonym">MTND4L</name>
    <name type="synonym">NADH4L</name>
    <name type="synonym">ND4L</name>
</gene>
<organism>
    <name type="scientific">Platyrrhinus dorsalis</name>
    <name type="common">Thomas's broad-nosed bat</name>
    <dbReference type="NCBI Taxonomy" id="362823"/>
    <lineage>
        <taxon>Eukaryota</taxon>
        <taxon>Metazoa</taxon>
        <taxon>Chordata</taxon>
        <taxon>Craniata</taxon>
        <taxon>Vertebrata</taxon>
        <taxon>Euteleostomi</taxon>
        <taxon>Mammalia</taxon>
        <taxon>Eutheria</taxon>
        <taxon>Laurasiatheria</taxon>
        <taxon>Chiroptera</taxon>
        <taxon>Yangochiroptera</taxon>
        <taxon>Phyllostomidae</taxon>
        <taxon>Stenodermatinae</taxon>
        <taxon>Platyrrhinus</taxon>
    </lineage>
</organism>
<accession>Q1HUZ9</accession>
<reference key="1">
    <citation type="journal article" date="2006" name="Mol. Phylogenet. Evol.">
        <title>Molecular systematics of Vampyressine bats (Phyllostomidae: Stenodermatinae) with comparison of direct and indirect surveys of mitochondrial DNA variation.</title>
        <authorList>
            <person name="Hoofer S.R."/>
            <person name="Baker R.J."/>
        </authorList>
    </citation>
    <scope>NUCLEOTIDE SEQUENCE [GENOMIC DNA]</scope>
</reference>
<protein>
    <recommendedName>
        <fullName>NADH-ubiquinone oxidoreductase chain 4L</fullName>
        <ecNumber>7.1.1.2</ecNumber>
    </recommendedName>
    <alternativeName>
        <fullName>NADH dehydrogenase subunit 4L</fullName>
    </alternativeName>
</protein>
<name>NU4LM_PLADO</name>
<sequence>MSITYMNMFMAFTISLLGLLLYRSHMMSSLLCLEGMMLSLFVMMTMIILNTHLTLASMIPIILLVFAACEAALGLSLLVMVSTTYGMDYVQNLNLLQC</sequence>
<geneLocation type="mitochondrion"/>